<name>FOLD_HALWD</name>
<reference key="1">
    <citation type="journal article" date="2006" name="BMC Genomics">
        <title>The genome of the square archaeon Haloquadratum walsbyi: life at the limits of water activity.</title>
        <authorList>
            <person name="Bolhuis H."/>
            <person name="Palm P."/>
            <person name="Wende A."/>
            <person name="Falb M."/>
            <person name="Rampp M."/>
            <person name="Rodriguez-Valera F."/>
            <person name="Pfeiffer F."/>
            <person name="Oesterhelt D."/>
        </authorList>
    </citation>
    <scope>NUCLEOTIDE SEQUENCE [LARGE SCALE GENOMIC DNA]</scope>
    <source>
        <strain>DSM 16790 / HBSQ001</strain>
    </source>
</reference>
<dbReference type="EC" id="1.5.1.5" evidence="1"/>
<dbReference type="EC" id="3.5.4.9" evidence="1"/>
<dbReference type="EMBL" id="AM180088">
    <property type="protein sequence ID" value="CAJ52897.1"/>
    <property type="molecule type" value="Genomic_DNA"/>
</dbReference>
<dbReference type="RefSeq" id="WP_011572010.1">
    <property type="nucleotide sequence ID" value="NC_008212.1"/>
</dbReference>
<dbReference type="SMR" id="Q18GK1"/>
<dbReference type="STRING" id="362976.HQ_2790A"/>
<dbReference type="GeneID" id="4193993"/>
<dbReference type="KEGG" id="hwa:HQ_2790A"/>
<dbReference type="eggNOG" id="arCOG04538">
    <property type="taxonomic scope" value="Archaea"/>
</dbReference>
<dbReference type="HOGENOM" id="CLU_034045_1_2_2"/>
<dbReference type="UniPathway" id="UPA00193"/>
<dbReference type="Proteomes" id="UP000001975">
    <property type="component" value="Chromosome"/>
</dbReference>
<dbReference type="GO" id="GO:0005829">
    <property type="term" value="C:cytosol"/>
    <property type="evidence" value="ECO:0007669"/>
    <property type="project" value="TreeGrafter"/>
</dbReference>
<dbReference type="GO" id="GO:0004477">
    <property type="term" value="F:methenyltetrahydrofolate cyclohydrolase activity"/>
    <property type="evidence" value="ECO:0007669"/>
    <property type="project" value="UniProtKB-UniRule"/>
</dbReference>
<dbReference type="GO" id="GO:0004488">
    <property type="term" value="F:methylenetetrahydrofolate dehydrogenase (NADP+) activity"/>
    <property type="evidence" value="ECO:0007669"/>
    <property type="project" value="UniProtKB-UniRule"/>
</dbReference>
<dbReference type="GO" id="GO:0000105">
    <property type="term" value="P:L-histidine biosynthetic process"/>
    <property type="evidence" value="ECO:0007669"/>
    <property type="project" value="UniProtKB-KW"/>
</dbReference>
<dbReference type="GO" id="GO:0009086">
    <property type="term" value="P:methionine biosynthetic process"/>
    <property type="evidence" value="ECO:0007669"/>
    <property type="project" value="UniProtKB-KW"/>
</dbReference>
<dbReference type="GO" id="GO:0006164">
    <property type="term" value="P:purine nucleotide biosynthetic process"/>
    <property type="evidence" value="ECO:0007669"/>
    <property type="project" value="UniProtKB-KW"/>
</dbReference>
<dbReference type="GO" id="GO:0035999">
    <property type="term" value="P:tetrahydrofolate interconversion"/>
    <property type="evidence" value="ECO:0007669"/>
    <property type="project" value="UniProtKB-UniRule"/>
</dbReference>
<dbReference type="CDD" id="cd01080">
    <property type="entry name" value="NAD_bind_m-THF_DH_Cyclohyd"/>
    <property type="match status" value="1"/>
</dbReference>
<dbReference type="FunFam" id="3.40.50.720:FF:000006">
    <property type="entry name" value="Bifunctional protein FolD"/>
    <property type="match status" value="1"/>
</dbReference>
<dbReference type="FunFam" id="3.40.50.10860:FF:000005">
    <property type="entry name" value="C-1-tetrahydrofolate synthase, cytoplasmic, putative"/>
    <property type="match status" value="1"/>
</dbReference>
<dbReference type="Gene3D" id="3.40.50.10860">
    <property type="entry name" value="Leucine Dehydrogenase, chain A, domain 1"/>
    <property type="match status" value="1"/>
</dbReference>
<dbReference type="Gene3D" id="3.40.50.720">
    <property type="entry name" value="NAD(P)-binding Rossmann-like Domain"/>
    <property type="match status" value="1"/>
</dbReference>
<dbReference type="HAMAP" id="MF_01576">
    <property type="entry name" value="THF_DHG_CYH"/>
    <property type="match status" value="1"/>
</dbReference>
<dbReference type="InterPro" id="IPR046346">
    <property type="entry name" value="Aminoacid_DH-like_N_sf"/>
</dbReference>
<dbReference type="InterPro" id="IPR036291">
    <property type="entry name" value="NAD(P)-bd_dom_sf"/>
</dbReference>
<dbReference type="InterPro" id="IPR000672">
    <property type="entry name" value="THF_DH/CycHdrlase"/>
</dbReference>
<dbReference type="InterPro" id="IPR020630">
    <property type="entry name" value="THF_DH/CycHdrlase_cat_dom"/>
</dbReference>
<dbReference type="InterPro" id="IPR020631">
    <property type="entry name" value="THF_DH/CycHdrlase_NAD-bd_dom"/>
</dbReference>
<dbReference type="NCBIfam" id="NF010764">
    <property type="entry name" value="PRK14167.1"/>
    <property type="match status" value="1"/>
</dbReference>
<dbReference type="PANTHER" id="PTHR48099:SF5">
    <property type="entry name" value="C-1-TETRAHYDROFOLATE SYNTHASE, CYTOPLASMIC"/>
    <property type="match status" value="1"/>
</dbReference>
<dbReference type="PANTHER" id="PTHR48099">
    <property type="entry name" value="C-1-TETRAHYDROFOLATE SYNTHASE, CYTOPLASMIC-RELATED"/>
    <property type="match status" value="1"/>
</dbReference>
<dbReference type="Pfam" id="PF00763">
    <property type="entry name" value="THF_DHG_CYH"/>
    <property type="match status" value="1"/>
</dbReference>
<dbReference type="Pfam" id="PF02882">
    <property type="entry name" value="THF_DHG_CYH_C"/>
    <property type="match status" value="1"/>
</dbReference>
<dbReference type="PRINTS" id="PR00085">
    <property type="entry name" value="THFDHDRGNASE"/>
</dbReference>
<dbReference type="SUPFAM" id="SSF53223">
    <property type="entry name" value="Aminoacid dehydrogenase-like, N-terminal domain"/>
    <property type="match status" value="1"/>
</dbReference>
<dbReference type="SUPFAM" id="SSF51735">
    <property type="entry name" value="NAD(P)-binding Rossmann-fold domains"/>
    <property type="match status" value="1"/>
</dbReference>
<sequence>MRFKYVASKYSCVTQTQTQLIDGTEVAASIRSDLISSVTRIVNTGTTPQLATVLMNDDPASQTYVSMKHDDCEEVGIATRDITIDPEAPAAELFDTVDELNADSSVHGILVQMPLPDHVDEREVLRRIDPKKDVDGFHPENVGRLVAGQPRYKPCTPHGIQKLLIAADIETEGANAVVIGRSNIVGKPMANLLIQKADAGNATVTTCHSRTNNLASKTRDADIIIAAAGVPEMIDGDMISTGTVVIDVGINRVETENGSELVGDVEFESAAKKADAITPVPGGVGPMTRAMLLWNTVKATAIATDTSIELP</sequence>
<organism>
    <name type="scientific">Haloquadratum walsbyi (strain DSM 16790 / HBSQ001)</name>
    <dbReference type="NCBI Taxonomy" id="362976"/>
    <lineage>
        <taxon>Archaea</taxon>
        <taxon>Methanobacteriati</taxon>
        <taxon>Methanobacteriota</taxon>
        <taxon>Stenosarchaea group</taxon>
        <taxon>Halobacteria</taxon>
        <taxon>Halobacteriales</taxon>
        <taxon>Haloferacaceae</taxon>
        <taxon>Haloquadratum</taxon>
    </lineage>
</organism>
<comment type="function">
    <text evidence="1">Catalyzes the oxidation of 5,10-methylenetetrahydrofolate to 5,10-methenyltetrahydrofolate and then the hydrolysis of 5,10-methenyltetrahydrofolate to 10-formyltetrahydrofolate.</text>
</comment>
<comment type="catalytic activity">
    <reaction evidence="1">
        <text>(6R)-5,10-methylene-5,6,7,8-tetrahydrofolate + NADP(+) = (6R)-5,10-methenyltetrahydrofolate + NADPH</text>
        <dbReference type="Rhea" id="RHEA:22812"/>
        <dbReference type="ChEBI" id="CHEBI:15636"/>
        <dbReference type="ChEBI" id="CHEBI:57455"/>
        <dbReference type="ChEBI" id="CHEBI:57783"/>
        <dbReference type="ChEBI" id="CHEBI:58349"/>
        <dbReference type="EC" id="1.5.1.5"/>
    </reaction>
</comment>
<comment type="catalytic activity">
    <reaction evidence="1">
        <text>(6R)-5,10-methenyltetrahydrofolate + H2O = (6R)-10-formyltetrahydrofolate + H(+)</text>
        <dbReference type="Rhea" id="RHEA:23700"/>
        <dbReference type="ChEBI" id="CHEBI:15377"/>
        <dbReference type="ChEBI" id="CHEBI:15378"/>
        <dbReference type="ChEBI" id="CHEBI:57455"/>
        <dbReference type="ChEBI" id="CHEBI:195366"/>
        <dbReference type="EC" id="3.5.4.9"/>
    </reaction>
</comment>
<comment type="pathway">
    <text evidence="1">One-carbon metabolism; tetrahydrofolate interconversion.</text>
</comment>
<comment type="subunit">
    <text evidence="1">Homodimer.</text>
</comment>
<comment type="similarity">
    <text evidence="1">Belongs to the tetrahydrofolate dehydrogenase/cyclohydrolase family.</text>
</comment>
<gene>
    <name evidence="1" type="primary">folD</name>
    <name type="ordered locus">HQ_2790A</name>
</gene>
<protein>
    <recommendedName>
        <fullName evidence="1">Bifunctional protein FolD</fullName>
    </recommendedName>
    <domain>
        <recommendedName>
            <fullName evidence="1">Methylenetetrahydrofolate dehydrogenase</fullName>
            <ecNumber evidence="1">1.5.1.5</ecNumber>
        </recommendedName>
    </domain>
    <domain>
        <recommendedName>
            <fullName evidence="1">Methenyltetrahydrofolate cyclohydrolase</fullName>
            <ecNumber evidence="1">3.5.4.9</ecNumber>
        </recommendedName>
    </domain>
</protein>
<evidence type="ECO:0000255" key="1">
    <source>
        <dbReference type="HAMAP-Rule" id="MF_01576"/>
    </source>
</evidence>
<proteinExistence type="inferred from homology"/>
<feature type="chain" id="PRO_0000268581" description="Bifunctional protein FolD">
    <location>
        <begin position="1"/>
        <end position="311"/>
    </location>
</feature>
<feature type="binding site" evidence="1">
    <location>
        <begin position="180"/>
        <end position="182"/>
    </location>
    <ligand>
        <name>NADP(+)</name>
        <dbReference type="ChEBI" id="CHEBI:58349"/>
    </ligand>
</feature>
<feature type="binding site" evidence="1">
    <location>
        <position position="209"/>
    </location>
    <ligand>
        <name>NADP(+)</name>
        <dbReference type="ChEBI" id="CHEBI:58349"/>
    </ligand>
</feature>
<feature type="binding site" evidence="1">
    <location>
        <position position="250"/>
    </location>
    <ligand>
        <name>NADP(+)</name>
        <dbReference type="ChEBI" id="CHEBI:58349"/>
    </ligand>
</feature>
<accession>Q18GK1</accession>
<keyword id="KW-0028">Amino-acid biosynthesis</keyword>
<keyword id="KW-0368">Histidine biosynthesis</keyword>
<keyword id="KW-0378">Hydrolase</keyword>
<keyword id="KW-0486">Methionine biosynthesis</keyword>
<keyword id="KW-0511">Multifunctional enzyme</keyword>
<keyword id="KW-0521">NADP</keyword>
<keyword id="KW-0554">One-carbon metabolism</keyword>
<keyword id="KW-0560">Oxidoreductase</keyword>
<keyword id="KW-0658">Purine biosynthesis</keyword>
<keyword id="KW-1185">Reference proteome</keyword>